<evidence type="ECO:0000250" key="1"/>
<evidence type="ECO:0000255" key="2">
    <source>
        <dbReference type="PROSITE-ProRule" id="PRU00411"/>
    </source>
</evidence>
<evidence type="ECO:0000305" key="3"/>
<feature type="chain" id="PRO_0000369177" description="HTH-type transcriptional regulator EcpR">
    <location>
        <begin position="1"/>
        <end position="196"/>
    </location>
</feature>
<feature type="domain" description="HTH luxR-type" evidence="2">
    <location>
        <begin position="138"/>
        <end position="196"/>
    </location>
</feature>
<feature type="DNA-binding region" description="H-T-H motif" evidence="2">
    <location>
        <begin position="162"/>
        <end position="181"/>
    </location>
</feature>
<reference key="1">
    <citation type="journal article" date="2006" name="Proc. Natl. Acad. Sci. U.S.A.">
        <title>Identification of genes subject to positive selection in uropathogenic strains of Escherichia coli: a comparative genomics approach.</title>
        <authorList>
            <person name="Chen S.L."/>
            <person name="Hung C.-S."/>
            <person name="Xu J."/>
            <person name="Reigstad C.S."/>
            <person name="Magrini V."/>
            <person name="Sabo A."/>
            <person name="Blasiar D."/>
            <person name="Bieri T."/>
            <person name="Meyer R.R."/>
            <person name="Ozersky P."/>
            <person name="Armstrong J.R."/>
            <person name="Fulton R.S."/>
            <person name="Latreille J.P."/>
            <person name="Spieth J."/>
            <person name="Hooton T.M."/>
            <person name="Mardis E.R."/>
            <person name="Hultgren S.J."/>
            <person name="Gordon J.I."/>
        </authorList>
    </citation>
    <scope>NUCLEOTIDE SEQUENCE [LARGE SCALE GENOMIC DNA]</scope>
    <source>
        <strain>UTI89 / UPEC</strain>
    </source>
</reference>
<keyword id="KW-0010">Activator</keyword>
<keyword id="KW-0963">Cytoplasm</keyword>
<keyword id="KW-0238">DNA-binding</keyword>
<keyword id="KW-0804">Transcription</keyword>
<keyword id="KW-0805">Transcription regulation</keyword>
<accession>Q1RFQ3</accession>
<sequence>MTWQNDYSRDYEVKNHMECQNRSDKYIWSPHDAYFYKGLSELIVDIDRLIYLSLEKIRKDFVFINLNTDSLTEFINRDNEWLSAVKGKQVVLIAARKSEALANYWYYNSNIRGVVYAGLSRDIRKELAYVINGRFLRKDIKKDKITDREMEIIRMTAQGMLPKSIARIENCSVKTVYTHRRNAEAKLYSKLYKLVQ</sequence>
<organism>
    <name type="scientific">Escherichia coli (strain UTI89 / UPEC)</name>
    <dbReference type="NCBI Taxonomy" id="364106"/>
    <lineage>
        <taxon>Bacteria</taxon>
        <taxon>Pseudomonadati</taxon>
        <taxon>Pseudomonadota</taxon>
        <taxon>Gammaproteobacteria</taxon>
        <taxon>Enterobacterales</taxon>
        <taxon>Enterobacteriaceae</taxon>
        <taxon>Escherichia</taxon>
    </lineage>
</organism>
<name>ECPR_ECOUT</name>
<gene>
    <name type="primary">ecpR</name>
    <name type="synonym">matA</name>
    <name type="ordered locus">UTI89_C0310</name>
</gene>
<comment type="function">
    <text evidence="1">Part of the ecpRABCDE operon, which encodes the E.coli common pilus (ECP). ECP is found in both commensal and pathogenic strains and plays a dual role in early-stage biofilm development and host cell recognition. Positively regulates the expression of the ecp operon (By similarity).</text>
</comment>
<comment type="subcellular location">
    <subcellularLocation>
        <location evidence="3">Cytoplasm</location>
    </subcellularLocation>
</comment>
<comment type="induction">
    <text evidence="1">Negatively regulated by H-NS. Positively autoregulated. Also positively regulated by IHF (By similarity).</text>
</comment>
<comment type="similarity">
    <text evidence="3">Belongs to the EcpR/MatA family.</text>
</comment>
<proteinExistence type="inferred from homology"/>
<protein>
    <recommendedName>
        <fullName>HTH-type transcriptional regulator EcpR</fullName>
    </recommendedName>
</protein>
<dbReference type="EMBL" id="CP000243">
    <property type="protein sequence ID" value="ABE05811.1"/>
    <property type="molecule type" value="Genomic_DNA"/>
</dbReference>
<dbReference type="SMR" id="Q1RFQ3"/>
<dbReference type="KEGG" id="eci:UTI89_C0310"/>
<dbReference type="HOGENOM" id="CLU_128111_0_0_6"/>
<dbReference type="Proteomes" id="UP000001952">
    <property type="component" value="Chromosome"/>
</dbReference>
<dbReference type="GO" id="GO:0005737">
    <property type="term" value="C:cytoplasm"/>
    <property type="evidence" value="ECO:0007669"/>
    <property type="project" value="UniProtKB-SubCell"/>
</dbReference>
<dbReference type="GO" id="GO:0003677">
    <property type="term" value="F:DNA binding"/>
    <property type="evidence" value="ECO:0007669"/>
    <property type="project" value="UniProtKB-KW"/>
</dbReference>
<dbReference type="GO" id="GO:0006355">
    <property type="term" value="P:regulation of DNA-templated transcription"/>
    <property type="evidence" value="ECO:0007669"/>
    <property type="project" value="InterPro"/>
</dbReference>
<dbReference type="CDD" id="cd06170">
    <property type="entry name" value="LuxR_C_like"/>
    <property type="match status" value="1"/>
</dbReference>
<dbReference type="Gene3D" id="1.10.10.10">
    <property type="entry name" value="Winged helix-like DNA-binding domain superfamily/Winged helix DNA-binding domain"/>
    <property type="match status" value="1"/>
</dbReference>
<dbReference type="InterPro" id="IPR016032">
    <property type="entry name" value="Sig_transdc_resp-reg_C-effctor"/>
</dbReference>
<dbReference type="InterPro" id="IPR000792">
    <property type="entry name" value="Tscrpt_reg_LuxR_C"/>
</dbReference>
<dbReference type="InterPro" id="IPR036388">
    <property type="entry name" value="WH-like_DNA-bd_sf"/>
</dbReference>
<dbReference type="Pfam" id="PF00196">
    <property type="entry name" value="GerE"/>
    <property type="match status" value="1"/>
</dbReference>
<dbReference type="PRINTS" id="PR00038">
    <property type="entry name" value="HTHLUXR"/>
</dbReference>
<dbReference type="SMART" id="SM00421">
    <property type="entry name" value="HTH_LUXR"/>
    <property type="match status" value="1"/>
</dbReference>
<dbReference type="SUPFAM" id="SSF46894">
    <property type="entry name" value="C-terminal effector domain of the bipartite response regulators"/>
    <property type="match status" value="1"/>
</dbReference>
<dbReference type="PROSITE" id="PS50043">
    <property type="entry name" value="HTH_LUXR_2"/>
    <property type="match status" value="1"/>
</dbReference>